<accession>Q9ZB62</accession>
<dbReference type="EC" id="2.1.3.3"/>
<dbReference type="EMBL" id="U43091">
    <property type="protein sequence ID" value="AAC78720.1"/>
    <property type="molecule type" value="Genomic_DNA"/>
</dbReference>
<dbReference type="SMR" id="Q9ZB62"/>
<dbReference type="UniPathway" id="UPA00068">
    <property type="reaction ID" value="UER00112"/>
</dbReference>
<dbReference type="GO" id="GO:0005737">
    <property type="term" value="C:cytoplasm"/>
    <property type="evidence" value="ECO:0007669"/>
    <property type="project" value="UniProtKB-SubCell"/>
</dbReference>
<dbReference type="GO" id="GO:0016597">
    <property type="term" value="F:amino acid binding"/>
    <property type="evidence" value="ECO:0007669"/>
    <property type="project" value="InterPro"/>
</dbReference>
<dbReference type="GO" id="GO:0004585">
    <property type="term" value="F:ornithine carbamoyltransferase activity"/>
    <property type="evidence" value="ECO:0007669"/>
    <property type="project" value="UniProtKB-UniRule"/>
</dbReference>
<dbReference type="GO" id="GO:0042450">
    <property type="term" value="P:arginine biosynthetic process via ornithine"/>
    <property type="evidence" value="ECO:0007669"/>
    <property type="project" value="TreeGrafter"/>
</dbReference>
<dbReference type="GO" id="GO:0019240">
    <property type="term" value="P:citrulline biosynthetic process"/>
    <property type="evidence" value="ECO:0007669"/>
    <property type="project" value="TreeGrafter"/>
</dbReference>
<dbReference type="GO" id="GO:0006526">
    <property type="term" value="P:L-arginine biosynthetic process"/>
    <property type="evidence" value="ECO:0007669"/>
    <property type="project" value="UniProtKB-UniPathway"/>
</dbReference>
<dbReference type="FunFam" id="3.40.50.1370:FF:000008">
    <property type="entry name" value="Ornithine carbamoyltransferase"/>
    <property type="match status" value="1"/>
</dbReference>
<dbReference type="Gene3D" id="3.40.50.1370">
    <property type="entry name" value="Aspartate/ornithine carbamoyltransferase"/>
    <property type="match status" value="2"/>
</dbReference>
<dbReference type="HAMAP" id="MF_01109">
    <property type="entry name" value="OTCase"/>
    <property type="match status" value="1"/>
</dbReference>
<dbReference type="InterPro" id="IPR006132">
    <property type="entry name" value="Asp/Orn_carbamoyltranf_P-bd"/>
</dbReference>
<dbReference type="InterPro" id="IPR006130">
    <property type="entry name" value="Asp/Orn_carbamoylTrfase"/>
</dbReference>
<dbReference type="InterPro" id="IPR036901">
    <property type="entry name" value="Asp/Orn_carbamoylTrfase_sf"/>
</dbReference>
<dbReference type="InterPro" id="IPR006131">
    <property type="entry name" value="Asp_carbamoyltransf_Asp/Orn-bd"/>
</dbReference>
<dbReference type="InterPro" id="IPR002292">
    <property type="entry name" value="Orn/put_carbamltrans"/>
</dbReference>
<dbReference type="InterPro" id="IPR024904">
    <property type="entry name" value="OTCase_ArgI"/>
</dbReference>
<dbReference type="NCBIfam" id="TIGR00658">
    <property type="entry name" value="orni_carb_tr"/>
    <property type="match status" value="1"/>
</dbReference>
<dbReference type="NCBIfam" id="NF001986">
    <property type="entry name" value="PRK00779.1"/>
    <property type="match status" value="1"/>
</dbReference>
<dbReference type="PANTHER" id="PTHR45753">
    <property type="entry name" value="ORNITHINE CARBAMOYLTRANSFERASE, MITOCHONDRIAL"/>
    <property type="match status" value="1"/>
</dbReference>
<dbReference type="PANTHER" id="PTHR45753:SF3">
    <property type="entry name" value="ORNITHINE TRANSCARBAMYLASE, MITOCHONDRIAL"/>
    <property type="match status" value="1"/>
</dbReference>
<dbReference type="Pfam" id="PF00185">
    <property type="entry name" value="OTCace"/>
    <property type="match status" value="1"/>
</dbReference>
<dbReference type="Pfam" id="PF02729">
    <property type="entry name" value="OTCace_N"/>
    <property type="match status" value="1"/>
</dbReference>
<dbReference type="PRINTS" id="PR00100">
    <property type="entry name" value="AOTCASE"/>
</dbReference>
<dbReference type="PRINTS" id="PR00102">
    <property type="entry name" value="OTCASE"/>
</dbReference>
<dbReference type="SUPFAM" id="SSF53671">
    <property type="entry name" value="Aspartate/ornithine carbamoyltransferase"/>
    <property type="match status" value="1"/>
</dbReference>
<proteinExistence type="inferred from homology"/>
<feature type="chain" id="PRO_0000112885" description="Ornithine carbamoyltransferase">
    <location>
        <begin position="1"/>
        <end position="311"/>
    </location>
</feature>
<feature type="binding site" evidence="2">
    <location>
        <position position="85"/>
    </location>
    <ligand>
        <name>carbamoyl phosphate</name>
        <dbReference type="ChEBI" id="CHEBI:58228"/>
    </ligand>
</feature>
<feature type="binding site" evidence="2">
    <location>
        <position position="109"/>
    </location>
    <ligand>
        <name>carbamoyl phosphate</name>
        <dbReference type="ChEBI" id="CHEBI:58228"/>
    </ligand>
</feature>
<feature type="binding site" evidence="2">
    <location>
        <begin position="136"/>
        <end position="139"/>
    </location>
    <ligand>
        <name>carbamoyl phosphate</name>
        <dbReference type="ChEBI" id="CHEBI:58228"/>
    </ligand>
</feature>
<feature type="binding site" evidence="2">
    <location>
        <position position="167"/>
    </location>
    <ligand>
        <name>L-ornithine</name>
        <dbReference type="ChEBI" id="CHEBI:46911"/>
    </ligand>
</feature>
<feature type="binding site" evidence="2">
    <location>
        <position position="231"/>
    </location>
    <ligand>
        <name>L-ornithine</name>
        <dbReference type="ChEBI" id="CHEBI:46911"/>
    </ligand>
</feature>
<feature type="binding site" evidence="2">
    <location>
        <begin position="235"/>
        <end position="236"/>
    </location>
    <ligand>
        <name>L-ornithine</name>
        <dbReference type="ChEBI" id="CHEBI:46911"/>
    </ligand>
</feature>
<feature type="binding site" evidence="2">
    <location>
        <begin position="271"/>
        <end position="272"/>
    </location>
    <ligand>
        <name>carbamoyl phosphate</name>
        <dbReference type="ChEBI" id="CHEBI:58228"/>
    </ligand>
</feature>
<feature type="binding site" evidence="2">
    <location>
        <position position="299"/>
    </location>
    <ligand>
        <name>carbamoyl phosphate</name>
        <dbReference type="ChEBI" id="CHEBI:58228"/>
    </ligand>
</feature>
<name>OTC_GEOSE</name>
<keyword id="KW-0028">Amino-acid biosynthesis</keyword>
<keyword id="KW-0055">Arginine biosynthesis</keyword>
<keyword id="KW-0963">Cytoplasm</keyword>
<keyword id="KW-0808">Transferase</keyword>
<evidence type="ECO:0000250" key="1"/>
<evidence type="ECO:0000255" key="2">
    <source>
        <dbReference type="HAMAP-Rule" id="MF_01109"/>
    </source>
</evidence>
<evidence type="ECO:0000305" key="3"/>
<organism>
    <name type="scientific">Geobacillus stearothermophilus</name>
    <name type="common">Bacillus stearothermophilus</name>
    <dbReference type="NCBI Taxonomy" id="1422"/>
    <lineage>
        <taxon>Bacteria</taxon>
        <taxon>Bacillati</taxon>
        <taxon>Bacillota</taxon>
        <taxon>Bacilli</taxon>
        <taxon>Bacillales</taxon>
        <taxon>Anoxybacillaceae</taxon>
        <taxon>Geobacillus</taxon>
    </lineage>
</organism>
<sequence length="311" mass="33886">MNAVMSLKGRDFLTLLDFSTEEILDLLALAADLKAKQKAGVSYTPLSGKTMAMIFEKPSGTRVSFEVGMIQLGGQAMYLNGNHLQLGRGETIADTARVLSQYVRVIMIRTFAHQKVEELAEYASFRSSNGLTDDDHPCQALADLLTIYEVKKTFQGVKLAYVGDGNNVANALLVAAAKVGMDVAIACPPGYEPKKEYVEAACRVGEQTGRRVTVTHDPLVAVAGADRIYTDVWTSMGQESESSERLQVFQPYQVNEELVKAAKPDYLFLHCLPAHRGEEVTAGVMDGPNSVVFEQAGNRLHAQKAILLSVL</sequence>
<comment type="function">
    <text evidence="1">Reversibly catalyzes the transfer of the carbamoyl group from carbamoyl phosphate (CP) to the N(epsilon) atom of ornithine (ORN) to produce L-citrulline.</text>
</comment>
<comment type="catalytic activity">
    <reaction>
        <text>carbamoyl phosphate + L-ornithine = L-citrulline + phosphate + H(+)</text>
        <dbReference type="Rhea" id="RHEA:19513"/>
        <dbReference type="ChEBI" id="CHEBI:15378"/>
        <dbReference type="ChEBI" id="CHEBI:43474"/>
        <dbReference type="ChEBI" id="CHEBI:46911"/>
        <dbReference type="ChEBI" id="CHEBI:57743"/>
        <dbReference type="ChEBI" id="CHEBI:58228"/>
        <dbReference type="EC" id="2.1.3.3"/>
    </reaction>
</comment>
<comment type="pathway">
    <text>Amino-acid biosynthesis; L-arginine biosynthesis; L-arginine from L-ornithine and carbamoyl phosphate: step 1/3.</text>
</comment>
<comment type="subcellular location">
    <subcellularLocation>
        <location evidence="1">Cytoplasm</location>
    </subcellularLocation>
</comment>
<comment type="similarity">
    <text evidence="3">Belongs to the aspartate/ornithine carbamoyltransferase superfamily. OTCase family.</text>
</comment>
<comment type="caution">
    <text evidence="3">Lacks the conserved threonine and arginine residues in positions 60 and 61, which are part of the carbamoylphosphate binding site; the threonine residue is replaced by a glycine residue.</text>
</comment>
<gene>
    <name type="primary">argF</name>
</gene>
<reference key="1">
    <citation type="journal article" date="1997" name="Eur. J. Biochem.">
        <title>Cloning and characterization of the arginine-specific carbamoyl-phosphate synthetase from Bacillus stearothermophilus.</title>
        <authorList>
            <person name="Yang H."/>
            <person name="Park S.M."/>
            <person name="Nolan W.G."/>
            <person name="Lu C.-D."/>
            <person name="Abdelal A.T."/>
        </authorList>
    </citation>
    <scope>NUCLEOTIDE SEQUENCE [GENOMIC DNA]</scope>
    <source>
        <strain>ATCC 12980 / DSM 22 / CCM 2062 / JCM 2501 / NBRC 12550 / NCIMB 8923 / NCTC 10339 / R-35646 / VKM B-510</strain>
    </source>
</reference>
<protein>
    <recommendedName>
        <fullName>Ornithine carbamoyltransferase</fullName>
        <shortName>OTCase</shortName>
        <ecNumber>2.1.3.3</ecNumber>
    </recommendedName>
</protein>